<reference key="1">
    <citation type="submission" date="2005-11" db="EMBL/GenBank/DDBJ databases">
        <title>NISC comparative sequencing initiative.</title>
        <authorList>
            <person name="Antonellis A."/>
            <person name="Ayele K."/>
            <person name="Benjamin B."/>
            <person name="Blakesley R.W."/>
            <person name="Boakye A."/>
            <person name="Bouffard G.G."/>
            <person name="Brinkley C."/>
            <person name="Brooks S."/>
            <person name="Chu G."/>
            <person name="Coleman H."/>
            <person name="Engle J."/>
            <person name="Gestole M."/>
            <person name="Greene A."/>
            <person name="Guan X."/>
            <person name="Gupta J."/>
            <person name="Haghighi P."/>
            <person name="Han J."/>
            <person name="Hansen N."/>
            <person name="Ho S.-L."/>
            <person name="Hu P."/>
            <person name="Hunter G."/>
            <person name="Hurle B."/>
            <person name="Idol J.R."/>
            <person name="Kwong P."/>
            <person name="Laric P."/>
            <person name="Larson S."/>
            <person name="Lee-Lin S.-Q."/>
            <person name="Legaspi R."/>
            <person name="Madden M."/>
            <person name="Maduro Q.L."/>
            <person name="Maduro V.B."/>
            <person name="Margulies E.H."/>
            <person name="Masiello C."/>
            <person name="Maskeri B."/>
            <person name="McDowell J."/>
            <person name="Mojidi H.A."/>
            <person name="Mullikin J.C."/>
            <person name="Oestreicher J.S."/>
            <person name="Park M."/>
            <person name="Portnoy M.E."/>
            <person name="Prasad A."/>
            <person name="Puri O."/>
            <person name="Reddix-Dugue N."/>
            <person name="Schandler K."/>
            <person name="Schueler M.G."/>
            <person name="Sison C."/>
            <person name="Stantripop S."/>
            <person name="Stephen E."/>
            <person name="Taye A."/>
            <person name="Thomas J.W."/>
            <person name="Thomas P.J."/>
            <person name="Tsipouri V."/>
            <person name="Ung L."/>
            <person name="Vogt J.L."/>
            <person name="Wetherby K.D."/>
            <person name="Young A."/>
            <person name="Green E.D."/>
        </authorList>
    </citation>
    <scope>NUCLEOTIDE SEQUENCE [LARGE SCALE GENOMIC DNA]</scope>
</reference>
<proteinExistence type="inferred from homology"/>
<evidence type="ECO:0000250" key="1"/>
<evidence type="ECO:0000250" key="2">
    <source>
        <dbReference type="UniProtKB" id="P08581"/>
    </source>
</evidence>
<evidence type="ECO:0000250" key="3">
    <source>
        <dbReference type="UniProtKB" id="P16056"/>
    </source>
</evidence>
<evidence type="ECO:0000255" key="4"/>
<evidence type="ECO:0000255" key="5">
    <source>
        <dbReference type="PROSITE-ProRule" id="PRU00159"/>
    </source>
</evidence>
<evidence type="ECO:0000255" key="6">
    <source>
        <dbReference type="PROSITE-ProRule" id="PRU00352"/>
    </source>
</evidence>
<evidence type="ECO:0000255" key="7">
    <source>
        <dbReference type="PROSITE-ProRule" id="PRU10028"/>
    </source>
</evidence>
<dbReference type="EC" id="2.7.10.1"/>
<dbReference type="EMBL" id="DP000020">
    <property type="protein sequence ID" value="ABB89800.1"/>
    <property type="molecule type" value="Genomic_DNA"/>
</dbReference>
<dbReference type="RefSeq" id="NP_001107619.1">
    <property type="nucleotide sequence ID" value="NM_001114147.1"/>
</dbReference>
<dbReference type="SMR" id="Q2QLA9"/>
<dbReference type="FunCoup" id="Q2QLA9">
    <property type="interactions" value="536"/>
</dbReference>
<dbReference type="STRING" id="9796.ENSECAP00000008993"/>
<dbReference type="GlyCosmos" id="Q2QLA9">
    <property type="glycosylation" value="13 sites, No reported glycans"/>
</dbReference>
<dbReference type="PaxDb" id="9796-ENSECAP00000008993"/>
<dbReference type="GeneID" id="100056013"/>
<dbReference type="KEGG" id="ecb:100056013"/>
<dbReference type="CTD" id="4233"/>
<dbReference type="HOGENOM" id="CLU_005158_0_0_1"/>
<dbReference type="InParanoid" id="Q2QLA9"/>
<dbReference type="OrthoDB" id="9985181at2759"/>
<dbReference type="TreeFam" id="TF317402"/>
<dbReference type="Proteomes" id="UP000002281">
    <property type="component" value="Chromosome 4"/>
</dbReference>
<dbReference type="Bgee" id="ENSECAG00000010385">
    <property type="expression patterns" value="Expressed in liver and 21 other cell types or tissues"/>
</dbReference>
<dbReference type="GO" id="GO:0009925">
    <property type="term" value="C:basal plasma membrane"/>
    <property type="evidence" value="ECO:0000318"/>
    <property type="project" value="GO_Central"/>
</dbReference>
<dbReference type="GO" id="GO:0005886">
    <property type="term" value="C:plasma membrane"/>
    <property type="evidence" value="ECO:0000318"/>
    <property type="project" value="GO_Central"/>
</dbReference>
<dbReference type="GO" id="GO:0043235">
    <property type="term" value="C:receptor complex"/>
    <property type="evidence" value="ECO:0000318"/>
    <property type="project" value="GO_Central"/>
</dbReference>
<dbReference type="GO" id="GO:0005524">
    <property type="term" value="F:ATP binding"/>
    <property type="evidence" value="ECO:0007669"/>
    <property type="project" value="UniProtKB-KW"/>
</dbReference>
<dbReference type="GO" id="GO:0005008">
    <property type="term" value="F:hepatocyte growth factor receptor activity"/>
    <property type="evidence" value="ECO:0000318"/>
    <property type="project" value="GO_Central"/>
</dbReference>
<dbReference type="GO" id="GO:0017154">
    <property type="term" value="F:semaphorin receptor activity"/>
    <property type="evidence" value="ECO:0007669"/>
    <property type="project" value="InterPro"/>
</dbReference>
<dbReference type="GO" id="GO:0007169">
    <property type="term" value="P:cell surface receptor protein tyrosine kinase signaling pathway"/>
    <property type="evidence" value="ECO:0000318"/>
    <property type="project" value="GO_Central"/>
</dbReference>
<dbReference type="GO" id="GO:0001889">
    <property type="term" value="P:liver development"/>
    <property type="evidence" value="ECO:0000318"/>
    <property type="project" value="GO_Central"/>
</dbReference>
<dbReference type="GO" id="GO:0030182">
    <property type="term" value="P:neuron differentiation"/>
    <property type="evidence" value="ECO:0000318"/>
    <property type="project" value="GO_Central"/>
</dbReference>
<dbReference type="GO" id="GO:0031016">
    <property type="term" value="P:pancreas development"/>
    <property type="evidence" value="ECO:0000318"/>
    <property type="project" value="GO_Central"/>
</dbReference>
<dbReference type="GO" id="GO:0050918">
    <property type="term" value="P:positive chemotaxis"/>
    <property type="evidence" value="ECO:0000250"/>
    <property type="project" value="UniProtKB"/>
</dbReference>
<dbReference type="GO" id="GO:2001028">
    <property type="term" value="P:positive regulation of endothelial cell chemotaxis"/>
    <property type="evidence" value="ECO:0000250"/>
    <property type="project" value="UniProtKB"/>
</dbReference>
<dbReference type="GO" id="GO:0071526">
    <property type="term" value="P:semaphorin-plexin signaling pathway"/>
    <property type="evidence" value="ECO:0000250"/>
    <property type="project" value="UniProtKB"/>
</dbReference>
<dbReference type="CDD" id="cd00603">
    <property type="entry name" value="IPT_PCSR"/>
    <property type="match status" value="1"/>
</dbReference>
<dbReference type="CDD" id="cd01180">
    <property type="entry name" value="IPT_plexin_repeat1"/>
    <property type="match status" value="1"/>
</dbReference>
<dbReference type="CDD" id="cd05058">
    <property type="entry name" value="PTKc_Met_Ron"/>
    <property type="match status" value="1"/>
</dbReference>
<dbReference type="FunFam" id="1.10.510.10:FF:000093">
    <property type="entry name" value="Hepatocyte growth factor receptor"/>
    <property type="match status" value="1"/>
</dbReference>
<dbReference type="FunFam" id="2.130.10.10:FF:000088">
    <property type="entry name" value="Hepatocyte growth factor receptor"/>
    <property type="match status" value="1"/>
</dbReference>
<dbReference type="FunFam" id="2.60.40.10:FF:000213">
    <property type="entry name" value="Hepatocyte growth factor receptor"/>
    <property type="match status" value="1"/>
</dbReference>
<dbReference type="FunFam" id="2.60.40.10:FF:000400">
    <property type="entry name" value="Hepatocyte growth factor receptor"/>
    <property type="match status" value="1"/>
</dbReference>
<dbReference type="FunFam" id="2.60.40.10:FF:002708">
    <property type="entry name" value="Hepatocyte growth factor receptor"/>
    <property type="match status" value="1"/>
</dbReference>
<dbReference type="FunFam" id="3.30.200.20:FF:000188">
    <property type="entry name" value="Hepatocyte growth factor receptor"/>
    <property type="match status" value="1"/>
</dbReference>
<dbReference type="Gene3D" id="2.60.40.10">
    <property type="entry name" value="Immunoglobulins"/>
    <property type="match status" value="3"/>
</dbReference>
<dbReference type="Gene3D" id="3.30.200.20">
    <property type="entry name" value="Phosphorylase Kinase, domain 1"/>
    <property type="match status" value="1"/>
</dbReference>
<dbReference type="Gene3D" id="1.10.510.10">
    <property type="entry name" value="Transferase(Phosphotransferase) domain 1"/>
    <property type="match status" value="1"/>
</dbReference>
<dbReference type="Gene3D" id="2.130.10.10">
    <property type="entry name" value="YVTN repeat-like/Quinoprotein amine dehydrogenase"/>
    <property type="match status" value="1"/>
</dbReference>
<dbReference type="InterPro" id="IPR013783">
    <property type="entry name" value="Ig-like_fold"/>
</dbReference>
<dbReference type="InterPro" id="IPR014756">
    <property type="entry name" value="Ig_E-set"/>
</dbReference>
<dbReference type="InterPro" id="IPR002909">
    <property type="entry name" value="IPT_dom"/>
</dbReference>
<dbReference type="InterPro" id="IPR011009">
    <property type="entry name" value="Kinase-like_dom_sf"/>
</dbReference>
<dbReference type="InterPro" id="IPR031148">
    <property type="entry name" value="Plexin"/>
</dbReference>
<dbReference type="InterPro" id="IPR002165">
    <property type="entry name" value="Plexin_repeat"/>
</dbReference>
<dbReference type="InterPro" id="IPR000719">
    <property type="entry name" value="Prot_kinase_dom"/>
</dbReference>
<dbReference type="InterPro" id="IPR017441">
    <property type="entry name" value="Protein_kinase_ATP_BS"/>
</dbReference>
<dbReference type="InterPro" id="IPR016201">
    <property type="entry name" value="PSI"/>
</dbReference>
<dbReference type="InterPro" id="IPR001627">
    <property type="entry name" value="Semap_dom"/>
</dbReference>
<dbReference type="InterPro" id="IPR036352">
    <property type="entry name" value="Semap_dom_sf"/>
</dbReference>
<dbReference type="InterPro" id="IPR001245">
    <property type="entry name" value="Ser-Thr/Tyr_kinase_cat_dom"/>
</dbReference>
<dbReference type="InterPro" id="IPR008266">
    <property type="entry name" value="Tyr_kinase_AS"/>
</dbReference>
<dbReference type="InterPro" id="IPR020635">
    <property type="entry name" value="Tyr_kinase_cat_dom"/>
</dbReference>
<dbReference type="InterPro" id="IPR016244">
    <property type="entry name" value="Tyr_kinase_HGF/MSP_rcpt"/>
</dbReference>
<dbReference type="InterPro" id="IPR015943">
    <property type="entry name" value="WD40/YVTN_repeat-like_dom_sf"/>
</dbReference>
<dbReference type="PANTHER" id="PTHR22625:SF61">
    <property type="entry name" value="HEPATOCYTE GROWTH FACTOR RECEPTOR"/>
    <property type="match status" value="1"/>
</dbReference>
<dbReference type="PANTHER" id="PTHR22625">
    <property type="entry name" value="PLEXIN"/>
    <property type="match status" value="1"/>
</dbReference>
<dbReference type="Pfam" id="PF07714">
    <property type="entry name" value="PK_Tyr_Ser-Thr"/>
    <property type="match status" value="1"/>
</dbReference>
<dbReference type="Pfam" id="PF01437">
    <property type="entry name" value="PSI"/>
    <property type="match status" value="1"/>
</dbReference>
<dbReference type="Pfam" id="PF01403">
    <property type="entry name" value="Sema"/>
    <property type="match status" value="1"/>
</dbReference>
<dbReference type="Pfam" id="PF01833">
    <property type="entry name" value="TIG"/>
    <property type="match status" value="3"/>
</dbReference>
<dbReference type="PIRSF" id="PIRSF000617">
    <property type="entry name" value="TyrPK_HGF-R"/>
    <property type="match status" value="1"/>
</dbReference>
<dbReference type="PRINTS" id="PR00109">
    <property type="entry name" value="TYRKINASE"/>
</dbReference>
<dbReference type="SMART" id="SM00429">
    <property type="entry name" value="IPT"/>
    <property type="match status" value="4"/>
</dbReference>
<dbReference type="SMART" id="SM00423">
    <property type="entry name" value="PSI"/>
    <property type="match status" value="1"/>
</dbReference>
<dbReference type="SMART" id="SM00630">
    <property type="entry name" value="Sema"/>
    <property type="match status" value="1"/>
</dbReference>
<dbReference type="SMART" id="SM00219">
    <property type="entry name" value="TyrKc"/>
    <property type="match status" value="1"/>
</dbReference>
<dbReference type="SUPFAM" id="SSF81296">
    <property type="entry name" value="E set domains"/>
    <property type="match status" value="3"/>
</dbReference>
<dbReference type="SUPFAM" id="SSF103575">
    <property type="entry name" value="Plexin repeat"/>
    <property type="match status" value="1"/>
</dbReference>
<dbReference type="SUPFAM" id="SSF56112">
    <property type="entry name" value="Protein kinase-like (PK-like)"/>
    <property type="match status" value="1"/>
</dbReference>
<dbReference type="SUPFAM" id="SSF101912">
    <property type="entry name" value="Sema domain"/>
    <property type="match status" value="1"/>
</dbReference>
<dbReference type="PROSITE" id="PS00107">
    <property type="entry name" value="PROTEIN_KINASE_ATP"/>
    <property type="match status" value="1"/>
</dbReference>
<dbReference type="PROSITE" id="PS50011">
    <property type="entry name" value="PROTEIN_KINASE_DOM"/>
    <property type="match status" value="1"/>
</dbReference>
<dbReference type="PROSITE" id="PS00109">
    <property type="entry name" value="PROTEIN_KINASE_TYR"/>
    <property type="match status" value="1"/>
</dbReference>
<dbReference type="PROSITE" id="PS51004">
    <property type="entry name" value="SEMA"/>
    <property type="match status" value="1"/>
</dbReference>
<feature type="signal peptide" evidence="4">
    <location>
        <begin position="1"/>
        <end position="24"/>
    </location>
</feature>
<feature type="chain" id="PRO_0000226362" description="Hepatocyte growth factor receptor">
    <location>
        <begin position="25"/>
        <end position="1381"/>
    </location>
</feature>
<feature type="topological domain" description="Extracellular" evidence="4">
    <location>
        <begin position="25"/>
        <end position="934"/>
    </location>
</feature>
<feature type="transmembrane region" description="Helical" evidence="4">
    <location>
        <begin position="935"/>
        <end position="955"/>
    </location>
</feature>
<feature type="topological domain" description="Cytoplasmic" evidence="4">
    <location>
        <begin position="956"/>
        <end position="1381"/>
    </location>
</feature>
<feature type="domain" description="Sema" evidence="6">
    <location>
        <begin position="27"/>
        <end position="515"/>
    </location>
</feature>
<feature type="domain" description="IPT/TIG 1">
    <location>
        <begin position="563"/>
        <end position="655"/>
    </location>
</feature>
<feature type="domain" description="IPT/TIG 2">
    <location>
        <begin position="657"/>
        <end position="739"/>
    </location>
</feature>
<feature type="domain" description="IPT/TIG 3">
    <location>
        <begin position="742"/>
        <end position="836"/>
    </location>
</feature>
<feature type="domain" description="Protein kinase" evidence="5">
    <location>
        <begin position="1078"/>
        <end position="1345"/>
    </location>
</feature>
<feature type="region of interest" description="Interaction with RANBP9" evidence="1">
    <location>
        <begin position="1212"/>
        <end position="1381"/>
    </location>
</feature>
<feature type="region of interest" description="Interaction with MUC20" evidence="1">
    <location>
        <begin position="1320"/>
        <end position="1359"/>
    </location>
</feature>
<feature type="active site" description="Proton acceptor" evidence="5 7">
    <location>
        <position position="1204"/>
    </location>
</feature>
<feature type="binding site" evidence="5">
    <location>
        <begin position="1084"/>
        <end position="1092"/>
    </location>
    <ligand>
        <name>ATP</name>
        <dbReference type="ChEBI" id="CHEBI:30616"/>
    </ligand>
</feature>
<feature type="binding site" evidence="5">
    <location>
        <position position="1110"/>
    </location>
    <ligand>
        <name>ATP</name>
        <dbReference type="ChEBI" id="CHEBI:30616"/>
    </ligand>
</feature>
<feature type="site" description="Cleavage" evidence="4">
    <location>
        <begin position="307"/>
        <end position="308"/>
    </location>
</feature>
<feature type="modified residue" description="Phosphoserine" evidence="2">
    <location>
        <position position="966"/>
    </location>
</feature>
<feature type="modified residue" description="Phosphothreonine" evidence="2">
    <location>
        <position position="977"/>
    </location>
</feature>
<feature type="modified residue" description="Phosphoserine" evidence="2">
    <location>
        <position position="990"/>
    </location>
</feature>
<feature type="modified residue" description="Phosphoserine" evidence="2">
    <location>
        <position position="997"/>
    </location>
</feature>
<feature type="modified residue" description="Phosphoserine" evidence="2">
    <location>
        <position position="1000"/>
    </location>
</feature>
<feature type="modified residue" description="Phosphotyrosine" evidence="2">
    <location>
        <position position="1003"/>
    </location>
</feature>
<feature type="modified residue" description="Phosphotyrosine" evidence="2">
    <location>
        <position position="1230"/>
    </location>
</feature>
<feature type="modified residue" description="Phosphotyrosine; by autocatalysis" evidence="2">
    <location>
        <position position="1234"/>
    </location>
</feature>
<feature type="modified residue" description="Phosphotyrosine; by autocatalysis" evidence="2">
    <location>
        <position position="1235"/>
    </location>
</feature>
<feature type="modified residue" description="Phosphothreonine" evidence="2">
    <location>
        <position position="1289"/>
    </location>
</feature>
<feature type="modified residue" description="Phosphotyrosine; by autocatalysis" evidence="2">
    <location>
        <position position="1349"/>
    </location>
</feature>
<feature type="modified residue" description="Phosphotyrosine; by autocatalysis" evidence="2">
    <location>
        <position position="1356"/>
    </location>
</feature>
<feature type="modified residue" description="Phosphotyrosine" evidence="2">
    <location>
        <position position="1365"/>
    </location>
</feature>
<feature type="glycosylation site" description="N-linked (GlcNAc...) asparagine" evidence="4">
    <location>
        <position position="45"/>
    </location>
</feature>
<feature type="glycosylation site" description="N-linked (GlcNAc...) asparagine" evidence="4">
    <location>
        <position position="106"/>
    </location>
</feature>
<feature type="glycosylation site" description="N-linked (GlcNAc...) asparagine" evidence="4">
    <location>
        <position position="202"/>
    </location>
</feature>
<feature type="glycosylation site" description="N-linked (GlcNAc...) asparagine" evidence="4">
    <location>
        <position position="358"/>
    </location>
</feature>
<feature type="glycosylation site" description="N-linked (GlcNAc...) asparagine" evidence="4">
    <location>
        <position position="399"/>
    </location>
</feature>
<feature type="glycosylation site" description="N-linked (GlcNAc...) asparagine" evidence="4">
    <location>
        <position position="405"/>
    </location>
</feature>
<feature type="glycosylation site" description="N-linked (GlcNAc...) asparagine" evidence="4">
    <location>
        <position position="449"/>
    </location>
</feature>
<feature type="glycosylation site" description="N-linked (GlcNAc...) asparagine" evidence="4">
    <location>
        <position position="553"/>
    </location>
</feature>
<feature type="glycosylation site" description="O-linked (Man) threonine" evidence="2">
    <location>
        <position position="582"/>
    </location>
</feature>
<feature type="glycosylation site" description="N-linked (GlcNAc...) asparagine" evidence="4">
    <location>
        <position position="607"/>
    </location>
</feature>
<feature type="glycosylation site" description="N-linked (GlcNAc...) asparagine" evidence="4">
    <location>
        <position position="635"/>
    </location>
</feature>
<feature type="glycosylation site" description="O-linked (Man) threonine" evidence="2">
    <location>
        <position position="676"/>
    </location>
</feature>
<feature type="glycosylation site" description="O-linked (Man) threonine" evidence="2">
    <location>
        <position position="761"/>
    </location>
</feature>
<feature type="glycosylation site" description="N-linked (GlcNAc...) asparagine" evidence="4">
    <location>
        <position position="785"/>
    </location>
</feature>
<feature type="glycosylation site" description="N-linked (GlcNAc...) asparagine" evidence="4">
    <location>
        <position position="879"/>
    </location>
</feature>
<feature type="glycosylation site" description="N-linked (GlcNAc...) asparagine" evidence="4">
    <location>
        <position position="930"/>
    </location>
</feature>
<feature type="disulfide bond" evidence="6">
    <location>
        <begin position="95"/>
        <end position="101"/>
    </location>
</feature>
<feature type="disulfide bond" evidence="6">
    <location>
        <begin position="98"/>
        <end position="160"/>
    </location>
</feature>
<feature type="disulfide bond" evidence="6">
    <location>
        <begin position="133"/>
        <end position="141"/>
    </location>
</feature>
<feature type="disulfide bond" evidence="6">
    <location>
        <begin position="172"/>
        <end position="175"/>
    </location>
</feature>
<feature type="disulfide bond" evidence="6">
    <location>
        <begin position="298"/>
        <end position="363"/>
    </location>
</feature>
<feature type="disulfide bond" evidence="6">
    <location>
        <begin position="385"/>
        <end position="397"/>
    </location>
</feature>
<feature type="disulfide bond" evidence="6">
    <location>
        <begin position="520"/>
        <end position="538"/>
    </location>
</feature>
<feature type="disulfide bond" evidence="6">
    <location>
        <begin position="526"/>
        <end position="561"/>
    </location>
</feature>
<feature type="disulfide bond" evidence="6">
    <location>
        <begin position="529"/>
        <end position="545"/>
    </location>
</feature>
<feature type="disulfide bond" evidence="6">
    <location>
        <begin position="541"/>
        <end position="551"/>
    </location>
</feature>
<comment type="function">
    <text evidence="1">Receptor tyrosine kinase that transduces signals from the extracellular matrix into the cytoplasm by binding to hepatocyte growth factor/HGF ligand. Regulates many physiological processes including proliferation, scattering, morphogenesis and survival. Ligand binding at the cell surface induces autophosphorylation of MET on its intracellular domain that provides docking sites for downstream signaling molecules. Following activation by ligand, interacts with the PI3-kinase subunit PIK3R1, PLCG1, SRC, GRB2, STAT3 or the adapter GAB1. Recruitment of these downstream effectors by MET leads to the activation of several signaling cascades including the RAS-ERK, PI3 kinase-AKT, or PLCgamma-PKC. The RAS-ERK activation is associated with the morphogenetic effects while PI3K/AKT coordinates prosurvival effects. During embryonic development, MET signaling plays a role in gastrulation, development and migration of muscles and neuronal precursors, angiogenesis and kidney formation. In adults, participates in wound healing as well as organ regeneration and tissue remodeling. Also promotes differentiation and proliferation of hematopoietic cells (By similarity).</text>
</comment>
<comment type="catalytic activity">
    <reaction evidence="7">
        <text>L-tyrosyl-[protein] + ATP = O-phospho-L-tyrosyl-[protein] + ADP + H(+)</text>
        <dbReference type="Rhea" id="RHEA:10596"/>
        <dbReference type="Rhea" id="RHEA-COMP:10136"/>
        <dbReference type="Rhea" id="RHEA-COMP:20101"/>
        <dbReference type="ChEBI" id="CHEBI:15378"/>
        <dbReference type="ChEBI" id="CHEBI:30616"/>
        <dbReference type="ChEBI" id="CHEBI:46858"/>
        <dbReference type="ChEBI" id="CHEBI:61978"/>
        <dbReference type="ChEBI" id="CHEBI:456216"/>
        <dbReference type="EC" id="2.7.10.1"/>
    </reaction>
</comment>
<comment type="activity regulation">
    <text evidence="1">In its inactive state, the C-terminal tail interacts with the catalytic domain and inhibits the kinase activity. Upon ligand binding, the C-terminal tail is displaced and becomes phosphorylated, thus increasing the kinase activity (By similarity).</text>
</comment>
<comment type="subunit">
    <text evidence="2 3">Heterodimer made of an alpha chain (50 kDa) and a beta chain (145 kDa) which are disulfide linked. Binds PLXNB1. Interacts when phosphorylated with downstream effectors including STAT3, PIK3R1, SRC, PCLG1, GRB2 and GAB1. Interacts with SPSB1, SPSB2 and SPSB4. Interacts with INPP5D/SHIP1. When phosphorylated at Tyr-1356, interacts with INPPL1/SHIP2. Interacts with RANBP9 and RANBP10, as well as SPSB1, SPSB2, SPSB3 and SPSB4. SPSB1 binding occurs in the presence and in the absence of HGF, however HGF treatment has a positive effect on this interaction. Interacts with MUC20; prevents interaction with GRB2 and suppresses hepatocyte growth factor-induced cell proliferation. Interacts with GRB10. Interacts with PTPN1 and PTPN2. Interacts with HSP90AA1 and HSP90AB1; the interaction suppresses MET kinase activity. Interacts with tensin TNS3 (By similarity). Interacts (when phosphorylated) with tensin TNS4 (via SH2 domain); the interaction increases MET protein stability by inhibiting MET endocytosis and subsequent lysosomal degradation (By similarity).</text>
</comment>
<comment type="subcellular location">
    <subcellularLocation>
        <location evidence="1">Membrane</location>
        <topology evidence="1">Single-pass type I membrane protein</topology>
    </subcellularLocation>
</comment>
<comment type="domain">
    <text evidence="1">The kinase domain is involved in SPSB1 binding.</text>
</comment>
<comment type="domain">
    <text evidence="1">The beta-propeller Sema domain mediates binding to HGF.</text>
</comment>
<comment type="PTM">
    <text evidence="2">Autophosphorylated in response to ligand binding on Tyr-1234 and Tyr-1235 in the kinase domain leading to further phosphorylation of Tyr-1349 and Tyr-1356 in the C-terminal multifunctional docking site. Dephosphorylated by PTPRJ at Tyr-1349 and Tyr-1365. Dephosphorylated by PTPN1 and PTPN2 (By similarity).</text>
</comment>
<comment type="PTM">
    <text evidence="2">Ubiquitinated. Ubiquitination by CBL regulates the receptor stability and activity through proteasomal degradation (By similarity).</text>
</comment>
<comment type="PTM">
    <text evidence="2">O-mannosylation of IPT/TIG domains by TMEM260 is required for protein maturation. O-mannosylated residues are composed of single mannose glycans that are not elongated or modified.</text>
</comment>
<comment type="similarity">
    <text evidence="5">Belongs to the protein kinase superfamily. Tyr protein kinase family.</text>
</comment>
<name>MET_HORSE</name>
<organism>
    <name type="scientific">Equus caballus</name>
    <name type="common">Horse</name>
    <dbReference type="NCBI Taxonomy" id="9796"/>
    <lineage>
        <taxon>Eukaryota</taxon>
        <taxon>Metazoa</taxon>
        <taxon>Chordata</taxon>
        <taxon>Craniata</taxon>
        <taxon>Vertebrata</taxon>
        <taxon>Euteleostomi</taxon>
        <taxon>Mammalia</taxon>
        <taxon>Eutheria</taxon>
        <taxon>Laurasiatheria</taxon>
        <taxon>Perissodactyla</taxon>
        <taxon>Equidae</taxon>
        <taxon>Equus</taxon>
    </lineage>
</organism>
<gene>
    <name type="primary">MET</name>
</gene>
<accession>Q2QLA9</accession>
<keyword id="KW-0067">ATP-binding</keyword>
<keyword id="KW-1015">Disulfide bond</keyword>
<keyword id="KW-0325">Glycoprotein</keyword>
<keyword id="KW-0418">Kinase</keyword>
<keyword id="KW-0472">Membrane</keyword>
<keyword id="KW-0547">Nucleotide-binding</keyword>
<keyword id="KW-0597">Phosphoprotein</keyword>
<keyword id="KW-0656">Proto-oncogene</keyword>
<keyword id="KW-0675">Receptor</keyword>
<keyword id="KW-1185">Reference proteome</keyword>
<keyword id="KW-0677">Repeat</keyword>
<keyword id="KW-0732">Signal</keyword>
<keyword id="KW-0808">Transferase</keyword>
<keyword id="KW-0812">Transmembrane</keyword>
<keyword id="KW-1133">Transmembrane helix</keyword>
<keyword id="KW-0829">Tyrosine-protein kinase</keyword>
<keyword id="KW-0832">Ubl conjugation</keyword>
<protein>
    <recommendedName>
        <fullName>Hepatocyte growth factor receptor</fullName>
        <shortName>HGF receptor</shortName>
        <ecNumber>2.7.10.1</ecNumber>
    </recommendedName>
    <alternativeName>
        <fullName>HGF/SF receptor</fullName>
    </alternativeName>
    <alternativeName>
        <fullName>Proto-oncogene c-Met</fullName>
    </alternativeName>
    <alternativeName>
        <fullName>Scatter factor receptor</fullName>
        <shortName>SF receptor</shortName>
    </alternativeName>
    <alternativeName>
        <fullName>Tyrosine-protein kinase Met</fullName>
    </alternativeName>
</protein>
<sequence length="1381" mass="154561">MKAPAVLAPGILVLLFTLVQKSDGECKEALVKSEMNVNMKYQLPNFTAETPIQNVVLHKHHIYLGATNYIYVLNDKDLQKVAEYKTGPVLEHPDCFPCQDCSRKANLSGGAWKDNINMALLVDTYYDDQLISCGSVHRGTCQRHVLPLNNVADIQSEVYCMYSPQAEEPHQCPDCVVSALGTKVLLSEKDRFVTFFVGNTINSSYLPDHSLHSISVRRLKETQDGFKFLTDQSYIDVLPEFRDSYPIKYIHAFESNHFIYFLTVQRETLDAQTFHTRIIRFCSVDSGLHSYMEMPLECILTEKRRKRSTSEEVFNILQAAYVSKPGAHLAKQIGANLNDDILYGVFAQSKPDSAEPMNRSAVCAFPVKYVNEFFNKIVNKNNVRCLQHFYGPHHEHCFNRTLLRNSSGCEVRNDEYRTEFTTALQRVDLFMGQFNQVLLTSISTFIKGNLTIANLGTSEGRFMQVVVSRSGSSTPHVNFHLDSHPVSPEVIVEHPLNQNGYTLVVTGKKITKIPLNGLGCEHFQSCSQCLSAPPFVQCGWCHDKCVRLEECHNGTWTQEICLPTIYKVFPTSAPLEGGTTLTVCGWDFGFRKNNKLDSKKTKVLLGNESCTLTLSESTSNTLKCTVGPAMNERFNISITVSNSRGTARYSTFSYVDPIITSISPSYGPKTGGTLLTLTGKYLNSGNSRHISIGGKTCTLKSVSDSILECYTPAQTTPTEFPVKLKIDLANREMNSFSYREDPIVYEIHPTKSFISGGSTITGVGKNLNSVSVLRMVINVREAGRNFTVACQHRSNSEIICCTTPSLQQLNLQLPLKTKAFFMLDGIHSKYFDLIYVHNPVFKPFEKPVMISIGNENVLEIKGNDIDPEAVKGEVLKVGNKSCENIHSHSEAVLCTVPSDLLKLNSELNIEWKQAVSSTILGKVIVQPDQNFTGLIVGVVSISIILLLLLGLFLWLKRRKQIKDLGSELVRYDARVHTPHLDRLVSARSVSPTTEMVSNESVDYRATFPEDQFPNSSQNGSCRQVQYPLTDLSPILTSGDSDISSPLLQNTVHIDLSALNPELVQAVQHVVIGPSSLIVHFNEVIGRGHFGCVYHGTLLDNDDKKIHCAVKSLNRITDIGEVSQFLTEGIIMKDFSHPNVLSLLGICLRSEGSPLVVLPYMKHGDLRNFIRNETHNPTVKDLIGFGLQVAKGMKYLASKKFVHRDLAARNCMLDEKFTVKVADFGLARDMYDKEYYSVHNKTGAKLPVKWMALESLQTQKFTTKSDVWSFGVLLWELMTRGAPPYPDVNTFDITVYLLQGRRLLQPEYCPDPLYEVMLKCWHPKAELRPSFSELVSRISAIFSTFIGEHYVHVNATYVNVKCVAPYPSLLSSQDNVDGEVDT</sequence>